<protein>
    <recommendedName>
        <fullName>Pre-mRNA-splicing factor ISY1 homolog</fullName>
    </recommendedName>
</protein>
<keyword id="KW-0507">mRNA processing</keyword>
<keyword id="KW-0508">mRNA splicing</keyword>
<keyword id="KW-0539">Nucleus</keyword>
<keyword id="KW-1185">Reference proteome</keyword>
<keyword id="KW-0747">Spliceosome</keyword>
<comment type="function">
    <text evidence="1">May play a role in pre-mRNA splicing.</text>
</comment>
<comment type="subunit">
    <text evidence="1">Identified in the spliceosome.</text>
</comment>
<comment type="subcellular location">
    <subcellularLocation>
        <location evidence="1">Nucleus</location>
    </subcellularLocation>
</comment>
<comment type="similarity">
    <text evidence="3">Belongs to the ISY1 family.</text>
</comment>
<gene>
    <name type="primary">isy1</name>
    <name type="ORF">DDB_G0285521</name>
</gene>
<proteinExistence type="inferred from homology"/>
<sequence length="299" mass="35579">MARNEEKAKSMLNRYLQLKGTESKQEERRPYLSNECDSLVDAEKWRRQILKEITRGITEIQNSALDEYKIRDLNDHINKLVREKGHWERRILQLGGPNHRALAPKLFDADGKEPLGTGTYRYYGEAKNLPGVAELFEKPEQTLHGTEKKTRQDLYKYIDSDYYGYRDDEDGKLEEIEREYEKYAIEQNVENWKKQQRDKFQINTNRFNNNNIKNSIAINKNTENKDEINIDDDEENDDNNNNNNNNNTENTENIENIQEEEEKEDIKFKSYVSLPSTSQIETILLEKRKEELRKRYTQN</sequence>
<evidence type="ECO:0000250" key="1"/>
<evidence type="ECO:0000256" key="2">
    <source>
        <dbReference type="SAM" id="MobiDB-lite"/>
    </source>
</evidence>
<evidence type="ECO:0000305" key="3"/>
<accession>Q54N41</accession>
<organism>
    <name type="scientific">Dictyostelium discoideum</name>
    <name type="common">Social amoeba</name>
    <dbReference type="NCBI Taxonomy" id="44689"/>
    <lineage>
        <taxon>Eukaryota</taxon>
        <taxon>Amoebozoa</taxon>
        <taxon>Evosea</taxon>
        <taxon>Eumycetozoa</taxon>
        <taxon>Dictyostelia</taxon>
        <taxon>Dictyosteliales</taxon>
        <taxon>Dictyosteliaceae</taxon>
        <taxon>Dictyostelium</taxon>
    </lineage>
</organism>
<dbReference type="EMBL" id="AAFI02000079">
    <property type="protein sequence ID" value="EAL64598.1"/>
    <property type="molecule type" value="Genomic_DNA"/>
</dbReference>
<dbReference type="RefSeq" id="XP_638102.1">
    <property type="nucleotide sequence ID" value="XM_633010.1"/>
</dbReference>
<dbReference type="SMR" id="Q54N41"/>
<dbReference type="FunCoup" id="Q54N41">
    <property type="interactions" value="957"/>
</dbReference>
<dbReference type="STRING" id="44689.Q54N41"/>
<dbReference type="PaxDb" id="44689-DDB0233583"/>
<dbReference type="EnsemblProtists" id="EAL64598">
    <property type="protein sequence ID" value="EAL64598"/>
    <property type="gene ID" value="DDB_G0285521"/>
</dbReference>
<dbReference type="GeneID" id="8625150"/>
<dbReference type="KEGG" id="ddi:DDB_G0285521"/>
<dbReference type="dictyBase" id="DDB_G0285521">
    <property type="gene designation" value="isy1"/>
</dbReference>
<dbReference type="VEuPathDB" id="AmoebaDB:DDB_G0285521"/>
<dbReference type="eggNOG" id="KOG3068">
    <property type="taxonomic scope" value="Eukaryota"/>
</dbReference>
<dbReference type="HOGENOM" id="CLU_043453_0_1_1"/>
<dbReference type="InParanoid" id="Q54N41"/>
<dbReference type="OMA" id="WESQINI"/>
<dbReference type="PhylomeDB" id="Q54N41"/>
<dbReference type="Reactome" id="R-DDI-6781823">
    <property type="pathway name" value="Formation of TC-NER Pre-Incision Complex"/>
</dbReference>
<dbReference type="Reactome" id="R-DDI-6782135">
    <property type="pathway name" value="Dual incision in TC-NER"/>
</dbReference>
<dbReference type="Reactome" id="R-DDI-6782210">
    <property type="pathway name" value="Gap-filling DNA repair synthesis and ligation in TC-NER"/>
</dbReference>
<dbReference type="Reactome" id="R-DDI-72163">
    <property type="pathway name" value="mRNA Splicing - Major Pathway"/>
</dbReference>
<dbReference type="PRO" id="PR:Q54N41"/>
<dbReference type="Proteomes" id="UP000002195">
    <property type="component" value="Chromosome 4"/>
</dbReference>
<dbReference type="GO" id="GO:0071013">
    <property type="term" value="C:catalytic step 2 spliceosome"/>
    <property type="evidence" value="ECO:0000318"/>
    <property type="project" value="GO_Central"/>
</dbReference>
<dbReference type="GO" id="GO:0071014">
    <property type="term" value="C:post-mRNA release spliceosomal complex"/>
    <property type="evidence" value="ECO:0000318"/>
    <property type="project" value="GO_Central"/>
</dbReference>
<dbReference type="GO" id="GO:0071020">
    <property type="term" value="C:post-spliceosomal complex"/>
    <property type="evidence" value="ECO:0000318"/>
    <property type="project" value="GO_Central"/>
</dbReference>
<dbReference type="GO" id="GO:0000974">
    <property type="term" value="C:Prp19 complex"/>
    <property type="evidence" value="ECO:0000318"/>
    <property type="project" value="GO_Central"/>
</dbReference>
<dbReference type="GO" id="GO:0005681">
    <property type="term" value="C:spliceosomal complex"/>
    <property type="evidence" value="ECO:0000250"/>
    <property type="project" value="dictyBase"/>
</dbReference>
<dbReference type="GO" id="GO:0000350">
    <property type="term" value="P:generation of catalytic spliceosome for second transesterification step"/>
    <property type="evidence" value="ECO:0000318"/>
    <property type="project" value="GO_Central"/>
</dbReference>
<dbReference type="GO" id="GO:0000389">
    <property type="term" value="P:mRNA 3'-splice site recognition"/>
    <property type="evidence" value="ECO:0000318"/>
    <property type="project" value="GO_Central"/>
</dbReference>
<dbReference type="GO" id="GO:0000398">
    <property type="term" value="P:mRNA splicing, via spliceosome"/>
    <property type="evidence" value="ECO:0000250"/>
    <property type="project" value="dictyBase"/>
</dbReference>
<dbReference type="FunFam" id="1.10.287.660:FF:000001">
    <property type="entry name" value="pre-mRNA-splicing factor ISY1 homolog"/>
    <property type="match status" value="1"/>
</dbReference>
<dbReference type="Gene3D" id="1.10.287.660">
    <property type="entry name" value="Helix hairpin bin"/>
    <property type="match status" value="1"/>
</dbReference>
<dbReference type="InterPro" id="IPR029012">
    <property type="entry name" value="Helix_hairpin_bin_sf"/>
</dbReference>
<dbReference type="InterPro" id="IPR009360">
    <property type="entry name" value="Isy1"/>
</dbReference>
<dbReference type="InterPro" id="IPR037200">
    <property type="entry name" value="Isy1_sf"/>
</dbReference>
<dbReference type="PANTHER" id="PTHR13021">
    <property type="entry name" value="PRE-MRNA-SPLICING FACTOR ISY1"/>
    <property type="match status" value="1"/>
</dbReference>
<dbReference type="Pfam" id="PF06246">
    <property type="entry name" value="Isy1"/>
    <property type="match status" value="1"/>
</dbReference>
<dbReference type="SUPFAM" id="SSF140102">
    <property type="entry name" value="ISY1 domain-like"/>
    <property type="match status" value="1"/>
</dbReference>
<name>ISY1_DICDI</name>
<feature type="chain" id="PRO_0000331195" description="Pre-mRNA-splicing factor ISY1 homolog">
    <location>
        <begin position="1"/>
        <end position="299"/>
    </location>
</feature>
<feature type="region of interest" description="Disordered" evidence="2">
    <location>
        <begin position="223"/>
        <end position="252"/>
    </location>
</feature>
<feature type="compositionally biased region" description="Acidic residues" evidence="2">
    <location>
        <begin position="229"/>
        <end position="238"/>
    </location>
</feature>
<feature type="compositionally biased region" description="Low complexity" evidence="2">
    <location>
        <begin position="239"/>
        <end position="252"/>
    </location>
</feature>
<reference key="1">
    <citation type="journal article" date="2005" name="Nature">
        <title>The genome of the social amoeba Dictyostelium discoideum.</title>
        <authorList>
            <person name="Eichinger L."/>
            <person name="Pachebat J.A."/>
            <person name="Gloeckner G."/>
            <person name="Rajandream M.A."/>
            <person name="Sucgang R."/>
            <person name="Berriman M."/>
            <person name="Song J."/>
            <person name="Olsen R."/>
            <person name="Szafranski K."/>
            <person name="Xu Q."/>
            <person name="Tunggal B."/>
            <person name="Kummerfeld S."/>
            <person name="Madera M."/>
            <person name="Konfortov B.A."/>
            <person name="Rivero F."/>
            <person name="Bankier A.T."/>
            <person name="Lehmann R."/>
            <person name="Hamlin N."/>
            <person name="Davies R."/>
            <person name="Gaudet P."/>
            <person name="Fey P."/>
            <person name="Pilcher K."/>
            <person name="Chen G."/>
            <person name="Saunders D."/>
            <person name="Sodergren E.J."/>
            <person name="Davis P."/>
            <person name="Kerhornou A."/>
            <person name="Nie X."/>
            <person name="Hall N."/>
            <person name="Anjard C."/>
            <person name="Hemphill L."/>
            <person name="Bason N."/>
            <person name="Farbrother P."/>
            <person name="Desany B."/>
            <person name="Just E."/>
            <person name="Morio T."/>
            <person name="Rost R."/>
            <person name="Churcher C.M."/>
            <person name="Cooper J."/>
            <person name="Haydock S."/>
            <person name="van Driessche N."/>
            <person name="Cronin A."/>
            <person name="Goodhead I."/>
            <person name="Muzny D.M."/>
            <person name="Mourier T."/>
            <person name="Pain A."/>
            <person name="Lu M."/>
            <person name="Harper D."/>
            <person name="Lindsay R."/>
            <person name="Hauser H."/>
            <person name="James K.D."/>
            <person name="Quiles M."/>
            <person name="Madan Babu M."/>
            <person name="Saito T."/>
            <person name="Buchrieser C."/>
            <person name="Wardroper A."/>
            <person name="Felder M."/>
            <person name="Thangavelu M."/>
            <person name="Johnson D."/>
            <person name="Knights A."/>
            <person name="Loulseged H."/>
            <person name="Mungall K.L."/>
            <person name="Oliver K."/>
            <person name="Price C."/>
            <person name="Quail M.A."/>
            <person name="Urushihara H."/>
            <person name="Hernandez J."/>
            <person name="Rabbinowitsch E."/>
            <person name="Steffen D."/>
            <person name="Sanders M."/>
            <person name="Ma J."/>
            <person name="Kohara Y."/>
            <person name="Sharp S."/>
            <person name="Simmonds M.N."/>
            <person name="Spiegler S."/>
            <person name="Tivey A."/>
            <person name="Sugano S."/>
            <person name="White B."/>
            <person name="Walker D."/>
            <person name="Woodward J.R."/>
            <person name="Winckler T."/>
            <person name="Tanaka Y."/>
            <person name="Shaulsky G."/>
            <person name="Schleicher M."/>
            <person name="Weinstock G.M."/>
            <person name="Rosenthal A."/>
            <person name="Cox E.C."/>
            <person name="Chisholm R.L."/>
            <person name="Gibbs R.A."/>
            <person name="Loomis W.F."/>
            <person name="Platzer M."/>
            <person name="Kay R.R."/>
            <person name="Williams J.G."/>
            <person name="Dear P.H."/>
            <person name="Noegel A.A."/>
            <person name="Barrell B.G."/>
            <person name="Kuspa A."/>
        </authorList>
    </citation>
    <scope>NUCLEOTIDE SEQUENCE [LARGE SCALE GENOMIC DNA]</scope>
    <source>
        <strain>AX4</strain>
    </source>
</reference>